<gene>
    <name type="primary">ISU1</name>
    <name type="ordered locus">KLLA0D07161g</name>
</gene>
<dbReference type="EMBL" id="CR382124">
    <property type="protein sequence ID" value="CAH00476.1"/>
    <property type="molecule type" value="Genomic_DNA"/>
</dbReference>
<dbReference type="RefSeq" id="XP_453380.1">
    <property type="nucleotide sequence ID" value="XM_453380.1"/>
</dbReference>
<dbReference type="SMR" id="Q6CRQ9"/>
<dbReference type="FunCoup" id="Q6CRQ9">
    <property type="interactions" value="422"/>
</dbReference>
<dbReference type="STRING" id="284590.Q6CRQ9"/>
<dbReference type="PaxDb" id="284590-Q6CRQ9"/>
<dbReference type="KEGG" id="kla:KLLA0_D07161g"/>
<dbReference type="eggNOG" id="KOG3361">
    <property type="taxonomic scope" value="Eukaryota"/>
</dbReference>
<dbReference type="HOGENOM" id="CLU_079283_1_2_1"/>
<dbReference type="InParanoid" id="Q6CRQ9"/>
<dbReference type="OMA" id="YMTERVR"/>
<dbReference type="UniPathway" id="UPA00266"/>
<dbReference type="Proteomes" id="UP000000598">
    <property type="component" value="Chromosome D"/>
</dbReference>
<dbReference type="GO" id="GO:0005759">
    <property type="term" value="C:mitochondrial matrix"/>
    <property type="evidence" value="ECO:0007669"/>
    <property type="project" value="UniProtKB-SubCell"/>
</dbReference>
<dbReference type="GO" id="GO:0051537">
    <property type="term" value="F:2 iron, 2 sulfur cluster binding"/>
    <property type="evidence" value="ECO:0007669"/>
    <property type="project" value="UniProtKB-KW"/>
</dbReference>
<dbReference type="GO" id="GO:0005506">
    <property type="term" value="F:iron ion binding"/>
    <property type="evidence" value="ECO:0007669"/>
    <property type="project" value="InterPro"/>
</dbReference>
<dbReference type="GO" id="GO:0016226">
    <property type="term" value="P:iron-sulfur cluster assembly"/>
    <property type="evidence" value="ECO:0007669"/>
    <property type="project" value="InterPro"/>
</dbReference>
<dbReference type="CDD" id="cd06664">
    <property type="entry name" value="IscU_like"/>
    <property type="match status" value="1"/>
</dbReference>
<dbReference type="FunFam" id="3.90.1010.10:FF:000005">
    <property type="entry name" value="Iron-sulfur cluster assembly protein"/>
    <property type="match status" value="1"/>
</dbReference>
<dbReference type="Gene3D" id="3.90.1010.10">
    <property type="match status" value="1"/>
</dbReference>
<dbReference type="InterPro" id="IPR011339">
    <property type="entry name" value="ISCU"/>
</dbReference>
<dbReference type="InterPro" id="IPR002871">
    <property type="entry name" value="NIF_FeS_clus_asmbl_NifU_N"/>
</dbReference>
<dbReference type="NCBIfam" id="TIGR01999">
    <property type="entry name" value="iscU"/>
    <property type="match status" value="1"/>
</dbReference>
<dbReference type="PANTHER" id="PTHR10093">
    <property type="entry name" value="IRON-SULFUR CLUSTER ASSEMBLY ENZYME NIFU HOMOLOG"/>
    <property type="match status" value="1"/>
</dbReference>
<dbReference type="Pfam" id="PF01592">
    <property type="entry name" value="NifU_N"/>
    <property type="match status" value="1"/>
</dbReference>
<dbReference type="SUPFAM" id="SSF82649">
    <property type="entry name" value="SufE/NifU"/>
    <property type="match status" value="1"/>
</dbReference>
<protein>
    <recommendedName>
        <fullName>Iron sulfur cluster assembly protein 1, mitochondrial</fullName>
    </recommendedName>
    <alternativeName>
        <fullName>Iron sulfur cluster scaffold protein 1</fullName>
    </alternativeName>
</protein>
<sequence length="180" mass="19093">MFRGQMFAVQRMGSALMHGGGGGTRIIGVAAARATAPTVGSSPSMASARFYHPKVIDHYTNPRNVGSLDKNLPNVGTGLVGAPACGDVMKLQIQVNDETGVIENVKFKTFGCGSAIASSSYMTELVRGKTLEDAAKIKNTEIARELSLPPVKLHCSMLAEDAIKAAIKDYQAKRPTTQLK</sequence>
<reference key="1">
    <citation type="journal article" date="2004" name="Nature">
        <title>Genome evolution in yeasts.</title>
        <authorList>
            <person name="Dujon B."/>
            <person name="Sherman D."/>
            <person name="Fischer G."/>
            <person name="Durrens P."/>
            <person name="Casaregola S."/>
            <person name="Lafontaine I."/>
            <person name="de Montigny J."/>
            <person name="Marck C."/>
            <person name="Neuveglise C."/>
            <person name="Talla E."/>
            <person name="Goffard N."/>
            <person name="Frangeul L."/>
            <person name="Aigle M."/>
            <person name="Anthouard V."/>
            <person name="Babour A."/>
            <person name="Barbe V."/>
            <person name="Barnay S."/>
            <person name="Blanchin S."/>
            <person name="Beckerich J.-M."/>
            <person name="Beyne E."/>
            <person name="Bleykasten C."/>
            <person name="Boisrame A."/>
            <person name="Boyer J."/>
            <person name="Cattolico L."/>
            <person name="Confanioleri F."/>
            <person name="de Daruvar A."/>
            <person name="Despons L."/>
            <person name="Fabre E."/>
            <person name="Fairhead C."/>
            <person name="Ferry-Dumazet H."/>
            <person name="Groppi A."/>
            <person name="Hantraye F."/>
            <person name="Hennequin C."/>
            <person name="Jauniaux N."/>
            <person name="Joyet P."/>
            <person name="Kachouri R."/>
            <person name="Kerrest A."/>
            <person name="Koszul R."/>
            <person name="Lemaire M."/>
            <person name="Lesur I."/>
            <person name="Ma L."/>
            <person name="Muller H."/>
            <person name="Nicaud J.-M."/>
            <person name="Nikolski M."/>
            <person name="Oztas S."/>
            <person name="Ozier-Kalogeropoulos O."/>
            <person name="Pellenz S."/>
            <person name="Potier S."/>
            <person name="Richard G.-F."/>
            <person name="Straub M.-L."/>
            <person name="Suleau A."/>
            <person name="Swennen D."/>
            <person name="Tekaia F."/>
            <person name="Wesolowski-Louvel M."/>
            <person name="Westhof E."/>
            <person name="Wirth B."/>
            <person name="Zeniou-Meyer M."/>
            <person name="Zivanovic Y."/>
            <person name="Bolotin-Fukuhara M."/>
            <person name="Thierry A."/>
            <person name="Bouchier C."/>
            <person name="Caudron B."/>
            <person name="Scarpelli C."/>
            <person name="Gaillardin C."/>
            <person name="Weissenbach J."/>
            <person name="Wincker P."/>
            <person name="Souciet J.-L."/>
        </authorList>
    </citation>
    <scope>NUCLEOTIDE SEQUENCE [LARGE SCALE GENOMIC DNA]</scope>
    <source>
        <strain>ATCC 8585 / CBS 2359 / DSM 70799 / NBRC 1267 / NRRL Y-1140 / WM37</strain>
    </source>
</reference>
<comment type="function">
    <text evidence="1">Scaffold protein for the de novo synthesis of iron-sulfur (Fe-S) clusters within mitochondria, which is required for maturation of both mitochondrial and cytoplasmic [2Fe-2S] and [4Fe-4S] proteins. First, a [2Fe-2S] cluster is transiently assembled on the scaffold protein ISU1. In a second step, the cluster is released from ISU1, transferred to a glutaredoxin, followed by the formation of mitochondrial [2Fe-2S] proteins, the synthesis of [4Fe-4S] clusters and their target-specific insertion into the recipient apoproteins. Cluster assembly on ISU1 depends on the function of the cysteine desulfurase complex NFS1-ISD11, which serves as the sulfur donor for cluster synthesis, the iron-binding protein frataxin as the putative iron donor, and the electron transfer chain comprised of ferredoxin reductase and ferredoxin, which receive their electrons from NADH.</text>
</comment>
<comment type="cofactor">
    <cofactor evidence="2">
        <name>[2Fe-2S] cluster</name>
        <dbReference type="ChEBI" id="CHEBI:190135"/>
    </cofactor>
    <text evidence="2">Binds 1 [2Fe-2S] cluster per subunit.</text>
</comment>
<comment type="pathway">
    <text evidence="1">Cofactor biosynthesis; iron-sulfur cluster biosynthesis.</text>
</comment>
<comment type="subunit">
    <text evidence="1">Component of the core Fe-S cluster (ISC) assembly machinery.</text>
</comment>
<comment type="subcellular location">
    <subcellularLocation>
        <location evidence="1">Mitochondrion matrix</location>
    </subcellularLocation>
</comment>
<comment type="similarity">
    <text evidence="4">Belongs to the NifU family.</text>
</comment>
<feature type="transit peptide" description="Mitochondrion" evidence="3">
    <location>
        <begin position="1"/>
        <end status="unknown"/>
    </location>
</feature>
<feature type="chain" id="PRO_0000019697" description="Iron sulfur cluster assembly protein 1, mitochondrial">
    <location>
        <begin status="unknown"/>
        <end position="180"/>
    </location>
</feature>
<accession>Q6CRQ9</accession>
<organism>
    <name type="scientific">Kluyveromyces lactis (strain ATCC 8585 / CBS 2359 / DSM 70799 / NBRC 1267 / NRRL Y-1140 / WM37)</name>
    <name type="common">Yeast</name>
    <name type="synonym">Candida sphaerica</name>
    <dbReference type="NCBI Taxonomy" id="284590"/>
    <lineage>
        <taxon>Eukaryota</taxon>
        <taxon>Fungi</taxon>
        <taxon>Dikarya</taxon>
        <taxon>Ascomycota</taxon>
        <taxon>Saccharomycotina</taxon>
        <taxon>Saccharomycetes</taxon>
        <taxon>Saccharomycetales</taxon>
        <taxon>Saccharomycetaceae</taxon>
        <taxon>Kluyveromyces</taxon>
    </lineage>
</organism>
<evidence type="ECO:0000250" key="1">
    <source>
        <dbReference type="UniProtKB" id="Q03020"/>
    </source>
</evidence>
<evidence type="ECO:0000250" key="2">
    <source>
        <dbReference type="UniProtKB" id="Q9UTC6"/>
    </source>
</evidence>
<evidence type="ECO:0000255" key="3"/>
<evidence type="ECO:0000305" key="4"/>
<keyword id="KW-0001">2Fe-2S</keyword>
<keyword id="KW-0408">Iron</keyword>
<keyword id="KW-0411">Iron-sulfur</keyword>
<keyword id="KW-0479">Metal-binding</keyword>
<keyword id="KW-0496">Mitochondrion</keyword>
<keyword id="KW-1185">Reference proteome</keyword>
<keyword id="KW-0809">Transit peptide</keyword>
<proteinExistence type="inferred from homology"/>
<name>ISU1_KLULA</name>